<gene>
    <name evidence="1" type="primary">nusG</name>
    <name type="ordered locus">bbp_040</name>
</gene>
<sequence length="181" mass="20901">MYKSYKKRWYVLQAFSGFEGRIAQSIREHVKLKKMEKLFGEVMVPSEEVIEIKAGQRKKSEYKFFPGYVLIQMIMNESSWHLVRSIPRVLGFIGGTPDRPLPITDQEVNTIINKLKQVGDKPRPKTLFEPGETVRVNDGPFSDFNGIVEEVDYEKNRLKVSVSIFGRSTPVELDFSQVKKN</sequence>
<proteinExistence type="inferred from homology"/>
<accession>Q89B15</accession>
<comment type="function">
    <text evidence="1">Participates in transcription elongation, termination and antitermination. In the absence of Rho, increases the rate of transcription elongation by the RNA polymerase (RNAP), probably by partially suppressing pausing. In the presence of Rho, modulates most Rho-dependent termination events by interacting with the RNAP to render the complex more susceptible to the termination activity of Rho. May be required to overcome a kinetic limitation of Rho to function at certain terminators. Also involved in ribosomal RNA transcriptional antitermination.</text>
</comment>
<comment type="subunit">
    <text evidence="1">Monomer. Interacts with the transcription termination factor Rho and with RNA polymerase.</text>
</comment>
<comment type="similarity">
    <text evidence="1">Belongs to the NusG family.</text>
</comment>
<organism>
    <name type="scientific">Buchnera aphidicola subsp. Baizongia pistaciae (strain Bp)</name>
    <dbReference type="NCBI Taxonomy" id="224915"/>
    <lineage>
        <taxon>Bacteria</taxon>
        <taxon>Pseudomonadati</taxon>
        <taxon>Pseudomonadota</taxon>
        <taxon>Gammaproteobacteria</taxon>
        <taxon>Enterobacterales</taxon>
        <taxon>Erwiniaceae</taxon>
        <taxon>Buchnera</taxon>
    </lineage>
</organism>
<feature type="chain" id="PRO_0000113920" description="Transcription termination/antitermination protein NusG">
    <location>
        <begin position="1"/>
        <end position="181"/>
    </location>
</feature>
<feature type="domain" description="KOW" evidence="1">
    <location>
        <begin position="130"/>
        <end position="158"/>
    </location>
</feature>
<keyword id="KW-1185">Reference proteome</keyword>
<keyword id="KW-0804">Transcription</keyword>
<keyword id="KW-0889">Transcription antitermination</keyword>
<keyword id="KW-0805">Transcription regulation</keyword>
<keyword id="KW-0806">Transcription termination</keyword>
<reference key="1">
    <citation type="journal article" date="2003" name="Proc. Natl. Acad. Sci. U.S.A.">
        <title>Reductive genome evolution in Buchnera aphidicola.</title>
        <authorList>
            <person name="van Ham R.C.H.J."/>
            <person name="Kamerbeek J."/>
            <person name="Palacios C."/>
            <person name="Rausell C."/>
            <person name="Abascal F."/>
            <person name="Bastolla U."/>
            <person name="Fernandez J.M."/>
            <person name="Jimenez L."/>
            <person name="Postigo M."/>
            <person name="Silva F.J."/>
            <person name="Tamames J."/>
            <person name="Viguera E."/>
            <person name="Latorre A."/>
            <person name="Valencia A."/>
            <person name="Moran F."/>
            <person name="Moya A."/>
        </authorList>
    </citation>
    <scope>NUCLEOTIDE SEQUENCE [LARGE SCALE GENOMIC DNA]</scope>
    <source>
        <strain>Bp</strain>
    </source>
</reference>
<name>NUSG_BUCBP</name>
<dbReference type="EMBL" id="AE016826">
    <property type="protein sequence ID" value="AAO26783.1"/>
    <property type="molecule type" value="Genomic_DNA"/>
</dbReference>
<dbReference type="RefSeq" id="WP_011091184.1">
    <property type="nucleotide sequence ID" value="NC_004545.1"/>
</dbReference>
<dbReference type="SMR" id="Q89B15"/>
<dbReference type="STRING" id="224915.bbp_040"/>
<dbReference type="KEGG" id="bab:bbp_040"/>
<dbReference type="eggNOG" id="COG0250">
    <property type="taxonomic scope" value="Bacteria"/>
</dbReference>
<dbReference type="HOGENOM" id="CLU_067287_1_0_6"/>
<dbReference type="OrthoDB" id="9809075at2"/>
<dbReference type="Proteomes" id="UP000000601">
    <property type="component" value="Chromosome"/>
</dbReference>
<dbReference type="GO" id="GO:0005829">
    <property type="term" value="C:cytosol"/>
    <property type="evidence" value="ECO:0007669"/>
    <property type="project" value="TreeGrafter"/>
</dbReference>
<dbReference type="GO" id="GO:0006353">
    <property type="term" value="P:DNA-templated transcription termination"/>
    <property type="evidence" value="ECO:0007669"/>
    <property type="project" value="UniProtKB-UniRule"/>
</dbReference>
<dbReference type="GO" id="GO:0032784">
    <property type="term" value="P:regulation of DNA-templated transcription elongation"/>
    <property type="evidence" value="ECO:0007669"/>
    <property type="project" value="InterPro"/>
</dbReference>
<dbReference type="GO" id="GO:0031564">
    <property type="term" value="P:transcription antitermination"/>
    <property type="evidence" value="ECO:0007669"/>
    <property type="project" value="UniProtKB-UniRule"/>
</dbReference>
<dbReference type="GO" id="GO:0140673">
    <property type="term" value="P:transcription elongation-coupled chromatin remodeling"/>
    <property type="evidence" value="ECO:0007669"/>
    <property type="project" value="InterPro"/>
</dbReference>
<dbReference type="CDD" id="cd06091">
    <property type="entry name" value="KOW_NusG"/>
    <property type="match status" value="1"/>
</dbReference>
<dbReference type="CDD" id="cd09891">
    <property type="entry name" value="NGN_Bact_1"/>
    <property type="match status" value="1"/>
</dbReference>
<dbReference type="FunFam" id="2.30.30.30:FF:000002">
    <property type="entry name" value="Transcription termination/antitermination factor NusG"/>
    <property type="match status" value="1"/>
</dbReference>
<dbReference type="FunFam" id="3.30.70.940:FF:000001">
    <property type="entry name" value="Transcription termination/antitermination protein NusG"/>
    <property type="match status" value="1"/>
</dbReference>
<dbReference type="Gene3D" id="2.30.30.30">
    <property type="match status" value="1"/>
</dbReference>
<dbReference type="Gene3D" id="3.30.70.940">
    <property type="entry name" value="NusG, N-terminal domain"/>
    <property type="match status" value="1"/>
</dbReference>
<dbReference type="HAMAP" id="MF_00948">
    <property type="entry name" value="NusG"/>
    <property type="match status" value="1"/>
</dbReference>
<dbReference type="InterPro" id="IPR005824">
    <property type="entry name" value="KOW"/>
</dbReference>
<dbReference type="InterPro" id="IPR047050">
    <property type="entry name" value="NGN"/>
</dbReference>
<dbReference type="InterPro" id="IPR006645">
    <property type="entry name" value="NGN-like_dom"/>
</dbReference>
<dbReference type="InterPro" id="IPR036735">
    <property type="entry name" value="NGN_dom_sf"/>
</dbReference>
<dbReference type="InterPro" id="IPR043425">
    <property type="entry name" value="NusG-like"/>
</dbReference>
<dbReference type="InterPro" id="IPR014722">
    <property type="entry name" value="Rib_uL2_dom2"/>
</dbReference>
<dbReference type="InterPro" id="IPR001062">
    <property type="entry name" value="Transcrpt_antiterm_NusG"/>
</dbReference>
<dbReference type="InterPro" id="IPR015869">
    <property type="entry name" value="Transcrpt_antiterm_NusG_bac_CS"/>
</dbReference>
<dbReference type="InterPro" id="IPR008991">
    <property type="entry name" value="Translation_prot_SH3-like_sf"/>
</dbReference>
<dbReference type="NCBIfam" id="TIGR00922">
    <property type="entry name" value="nusG"/>
    <property type="match status" value="1"/>
</dbReference>
<dbReference type="PANTHER" id="PTHR30265">
    <property type="entry name" value="RHO-INTERACTING TRANSCRIPTION TERMINATION FACTOR NUSG"/>
    <property type="match status" value="1"/>
</dbReference>
<dbReference type="PANTHER" id="PTHR30265:SF2">
    <property type="entry name" value="TRANSCRIPTION TERMINATION_ANTITERMINATION PROTEIN NUSG"/>
    <property type="match status" value="1"/>
</dbReference>
<dbReference type="Pfam" id="PF00467">
    <property type="entry name" value="KOW"/>
    <property type="match status" value="1"/>
</dbReference>
<dbReference type="Pfam" id="PF02357">
    <property type="entry name" value="NusG"/>
    <property type="match status" value="1"/>
</dbReference>
<dbReference type="PRINTS" id="PR00338">
    <property type="entry name" value="NUSGTNSCPFCT"/>
</dbReference>
<dbReference type="SMART" id="SM00739">
    <property type="entry name" value="KOW"/>
    <property type="match status" value="1"/>
</dbReference>
<dbReference type="SMART" id="SM00738">
    <property type="entry name" value="NGN"/>
    <property type="match status" value="1"/>
</dbReference>
<dbReference type="SUPFAM" id="SSF82679">
    <property type="entry name" value="N-utilization substance G protein NusG, N-terminal domain"/>
    <property type="match status" value="1"/>
</dbReference>
<dbReference type="SUPFAM" id="SSF50104">
    <property type="entry name" value="Translation proteins SH3-like domain"/>
    <property type="match status" value="1"/>
</dbReference>
<dbReference type="PROSITE" id="PS01014">
    <property type="entry name" value="NUSG"/>
    <property type="match status" value="1"/>
</dbReference>
<protein>
    <recommendedName>
        <fullName evidence="1">Transcription termination/antitermination protein NusG</fullName>
    </recommendedName>
</protein>
<evidence type="ECO:0000255" key="1">
    <source>
        <dbReference type="HAMAP-Rule" id="MF_00948"/>
    </source>
</evidence>